<name>DPP5_PORG3</name>
<reference key="1">
    <citation type="journal article" date="2008" name="DNA Res.">
        <title>Determination of the genome sequence of Porphyromonas gingivalis strain ATCC 33277 and genomic comparison with strain W83 revealed extensive genome rearrangements in P. gingivalis.</title>
        <authorList>
            <person name="Naito M."/>
            <person name="Hirakawa H."/>
            <person name="Yamashita A."/>
            <person name="Ohara N."/>
            <person name="Shoji M."/>
            <person name="Yukitake H."/>
            <person name="Nakayama K."/>
            <person name="Toh H."/>
            <person name="Yoshimura F."/>
            <person name="Kuhara S."/>
            <person name="Hattori M."/>
            <person name="Hayashi T."/>
            <person name="Nakayama K."/>
        </authorList>
    </citation>
    <scope>NUCLEOTIDE SEQUENCE [LARGE SCALE GENOMIC DNA]</scope>
    <source>
        <strain>ATCC 33277 / DSM 20709 / CIP 103683 / JCM 12257 / NCTC 11834 / 2561</strain>
    </source>
</reference>
<reference key="2">
    <citation type="journal article" date="2014" name="J. Biol. Chem.">
        <title>Identification and characterization of prokaryotic dipeptidyl-peptidase 5 from Porphyromonas gingivalis.</title>
        <authorList>
            <person name="Ohara-Nemoto Y."/>
            <person name="Rouf S.M."/>
            <person name="Naito M."/>
            <person name="Yanase A."/>
            <person name="Tetsuo F."/>
            <person name="Ono T."/>
            <person name="Kobayakawa T."/>
            <person name="Shimoyama Y."/>
            <person name="Kimura S."/>
            <person name="Nakayama K."/>
            <person name="Saiki K."/>
            <person name="Konishi K."/>
            <person name="Nemoto T.K."/>
        </authorList>
    </citation>
    <scope>PROTEIN SEQUENCE OF 25-35</scope>
    <scope>FUNCTION</scope>
    <scope>CATALYTIC ACTIVITY</scope>
    <scope>SUBSTRATE SPECIFICITY</scope>
    <scope>BIOPHYSICOCHEMICAL PROPERTIES</scope>
    <scope>SUBCELLULAR LOCATION</scope>
    <scope>SUBUNIT</scope>
    <scope>3D-STRUCTURE MODELING</scope>
    <source>
        <strain>ATCC 33277 / DSM 20709 / CIP 103683 / JCM 12257 / NCTC 11834 / 2561</strain>
    </source>
</reference>
<evidence type="ECO:0000255" key="1"/>
<evidence type="ECO:0000269" key="2">
    <source>
    </source>
</evidence>
<evidence type="ECO:0000303" key="3">
    <source>
    </source>
</evidence>
<evidence type="ECO:0000305" key="4">
    <source>
    </source>
</evidence>
<evidence type="ECO:0000312" key="5">
    <source>
        <dbReference type="EMBL" id="BAG33275.1"/>
    </source>
</evidence>
<proteinExistence type="evidence at protein level"/>
<protein>
    <recommendedName>
        <fullName evidence="3">Dipeptidyl-peptidase 5</fullName>
        <shortName evidence="3">DPP5</shortName>
        <ecNumber evidence="2">3.4.14.-</ecNumber>
    </recommendedName>
    <alternativeName>
        <fullName evidence="3">MER034615</fullName>
    </alternativeName>
</protein>
<accession>B2RIT0</accession>
<organism>
    <name type="scientific">Porphyromonas gingivalis (strain ATCC 33277 / DSM 20709 / CIP 103683 / JCM 12257 / NCTC 11834 / 2561)</name>
    <dbReference type="NCBI Taxonomy" id="431947"/>
    <lineage>
        <taxon>Bacteria</taxon>
        <taxon>Pseudomonadati</taxon>
        <taxon>Bacteroidota</taxon>
        <taxon>Bacteroidia</taxon>
        <taxon>Bacteroidales</taxon>
        <taxon>Porphyromonadaceae</taxon>
        <taxon>Porphyromonas</taxon>
    </lineage>
</organism>
<gene>
    <name evidence="3" type="primary">dpp5</name>
    <name evidence="5" type="ordered locus">PGN_0756</name>
</gene>
<keyword id="KW-0031">Aminopeptidase</keyword>
<keyword id="KW-0903">Direct protein sequencing</keyword>
<keyword id="KW-0378">Hydrolase</keyword>
<keyword id="KW-0574">Periplasm</keyword>
<keyword id="KW-0645">Protease</keyword>
<keyword id="KW-0677">Repeat</keyword>
<keyword id="KW-0720">Serine protease</keyword>
<keyword id="KW-0732">Signal</keyword>
<keyword id="KW-0853">WD repeat</keyword>
<dbReference type="EC" id="3.4.14.-" evidence="2"/>
<dbReference type="EMBL" id="AP009380">
    <property type="protein sequence ID" value="BAG33275.1"/>
    <property type="molecule type" value="Genomic_DNA"/>
</dbReference>
<dbReference type="RefSeq" id="WP_012457755.1">
    <property type="nucleotide sequence ID" value="NC_010729.1"/>
</dbReference>
<dbReference type="SMR" id="B2RIT0"/>
<dbReference type="ESTHER" id="porgi-q7mwa7">
    <property type="family name" value="Prolyl_oligopeptidase_S9"/>
</dbReference>
<dbReference type="MEROPS" id="S09.075"/>
<dbReference type="GeneID" id="29255975"/>
<dbReference type="KEGG" id="pgn:PGN_0756"/>
<dbReference type="eggNOG" id="COG0823">
    <property type="taxonomic scope" value="Bacteria"/>
</dbReference>
<dbReference type="eggNOG" id="COG1506">
    <property type="taxonomic scope" value="Bacteria"/>
</dbReference>
<dbReference type="HOGENOM" id="CLU_008615_0_2_10"/>
<dbReference type="OrthoDB" id="9812921at2"/>
<dbReference type="BioCyc" id="PGIN431947:G1G2V-828-MONOMER"/>
<dbReference type="Proteomes" id="UP000008842">
    <property type="component" value="Chromosome"/>
</dbReference>
<dbReference type="GO" id="GO:0042597">
    <property type="term" value="C:periplasmic space"/>
    <property type="evidence" value="ECO:0000314"/>
    <property type="project" value="UniProtKB"/>
</dbReference>
<dbReference type="GO" id="GO:0004177">
    <property type="term" value="F:aminopeptidase activity"/>
    <property type="evidence" value="ECO:0007669"/>
    <property type="project" value="UniProtKB-KW"/>
</dbReference>
<dbReference type="GO" id="GO:0008239">
    <property type="term" value="F:dipeptidyl-peptidase activity"/>
    <property type="evidence" value="ECO:0000314"/>
    <property type="project" value="UniProtKB"/>
</dbReference>
<dbReference type="GO" id="GO:0042277">
    <property type="term" value="F:peptide binding"/>
    <property type="evidence" value="ECO:0000314"/>
    <property type="project" value="UniProtKB"/>
</dbReference>
<dbReference type="GO" id="GO:0042803">
    <property type="term" value="F:protein homodimerization activity"/>
    <property type="evidence" value="ECO:0000314"/>
    <property type="project" value="UniProtKB"/>
</dbReference>
<dbReference type="GO" id="GO:0004252">
    <property type="term" value="F:serine-type endopeptidase activity"/>
    <property type="evidence" value="ECO:0007669"/>
    <property type="project" value="TreeGrafter"/>
</dbReference>
<dbReference type="GO" id="GO:0043171">
    <property type="term" value="P:peptide catabolic process"/>
    <property type="evidence" value="ECO:0000314"/>
    <property type="project" value="UniProtKB"/>
</dbReference>
<dbReference type="GO" id="GO:0006508">
    <property type="term" value="P:proteolysis"/>
    <property type="evidence" value="ECO:0007669"/>
    <property type="project" value="UniProtKB-KW"/>
</dbReference>
<dbReference type="FunFam" id="2.120.10.30:FF:000075">
    <property type="entry name" value="S9 family peptidase"/>
    <property type="match status" value="1"/>
</dbReference>
<dbReference type="FunFam" id="2.120.10.30:FF:000079">
    <property type="entry name" value="S9 family peptidase"/>
    <property type="match status" value="1"/>
</dbReference>
<dbReference type="FunFam" id="3.40.50.1820:FF:000028">
    <property type="entry name" value="S9 family peptidase"/>
    <property type="match status" value="1"/>
</dbReference>
<dbReference type="Gene3D" id="3.40.50.1820">
    <property type="entry name" value="alpha/beta hydrolase"/>
    <property type="match status" value="1"/>
</dbReference>
<dbReference type="Gene3D" id="2.120.10.30">
    <property type="entry name" value="TolB, C-terminal domain"/>
    <property type="match status" value="2"/>
</dbReference>
<dbReference type="InterPro" id="IPR011042">
    <property type="entry name" value="6-blade_b-propeller_TolB-like"/>
</dbReference>
<dbReference type="InterPro" id="IPR029058">
    <property type="entry name" value="AB_hydrolase_fold"/>
</dbReference>
<dbReference type="InterPro" id="IPR011659">
    <property type="entry name" value="PD40"/>
</dbReference>
<dbReference type="InterPro" id="IPR001375">
    <property type="entry name" value="Peptidase_S9_cat"/>
</dbReference>
<dbReference type="PANTHER" id="PTHR42776:SF13">
    <property type="entry name" value="DIPEPTIDYL-PEPTIDASE 5"/>
    <property type="match status" value="1"/>
</dbReference>
<dbReference type="PANTHER" id="PTHR42776">
    <property type="entry name" value="SERINE PEPTIDASE S9 FAMILY MEMBER"/>
    <property type="match status" value="1"/>
</dbReference>
<dbReference type="Pfam" id="PF07676">
    <property type="entry name" value="PD40"/>
    <property type="match status" value="3"/>
</dbReference>
<dbReference type="Pfam" id="PF00326">
    <property type="entry name" value="Peptidase_S9"/>
    <property type="match status" value="1"/>
</dbReference>
<dbReference type="SUPFAM" id="SSF53474">
    <property type="entry name" value="alpha/beta-Hydrolases"/>
    <property type="match status" value="1"/>
</dbReference>
<dbReference type="SUPFAM" id="SSF82171">
    <property type="entry name" value="DPP6 N-terminal domain-like"/>
    <property type="match status" value="1"/>
</dbReference>
<comment type="function">
    <text evidence="2">Catalyzes the removal of dipeptides from the N-terminus of oligopeptides. Prefers Ala and hydrophobic residues except Pro at the P1 position, and has no preference for P2 residues. Shows high dipeptidyl peptidase activity toward the synthetic substrates Lys-Ala-, Gly-Phe-, Met-Leu-, and Ser-Tyr-methylcoumaryl-7-amide (MCA), and slowly hydrolyzes Val-Tyr-MCA. Is likely involved in amino acid metabolism and bacterial growth of asaccharolytic P.gingivalis, that utilizes amino acids from extracellular proteinaceous nutrients as energy and carbon sources.</text>
</comment>
<comment type="biophysicochemical properties">
    <kinetics>
        <KM evidence="2">396 uM for Gly-Phe-MCA (at 37 degrees Celsius and pH 6.0)</KM>
        <KM evidence="2">688 uM for Lys-Ala-MCA (at 37 degrees Celsius and pH 6.0)</KM>
        <KM evidence="2">701 uM for Met-Leu-MCA (at 37 degrees Celsius and pH 6.0)</KM>
        <KM evidence="2">151 uM for Lys-Phe-MCA (at 37 degrees Celsius and pH 6.0)</KM>
        <KM evidence="2">296 uM for Ser-Tyr-MCA (at 37 degrees Celsius and pH 6.0)</KM>
        <KM evidence="2">146 uM for Lys-Leu-MCA (at 37 degrees Celsius and pH 6.0)</KM>
        <KM evidence="2">220 uM for Lys-Val-MCA (at 37 degrees Celsius and pH 6.0)</KM>
        <text evidence="2">kcat is 5638 sec(-1) with Gly-Phe-MCA as substrate. kcat is 7577 sec(-1) with Lys-Ala-MCA as substrate. kcat is 5562 sec(-1) with Met-Leu-MCA as substrate. kcat is 744 sec(-1) with Lys-Phe-MCA as substrate. kcat is 1329 sec(-1) with Ser-Tyr-MCA as substrate. kcat is 490 sec(-1) with Lys-Leu-MCA as substrate. kcat is 299 sec(-1) with Lys-Val-MCA as substrate (at 37 degrees Celsius and pH 6.0).</text>
    </kinetics>
    <phDependence>
        <text evidence="2">Optimum pH is 6.7, using Lys-Ala-MCA as substrate.</text>
    </phDependence>
</comment>
<comment type="subunit">
    <text evidence="2">Homodimer.</text>
</comment>
<comment type="subcellular location">
    <subcellularLocation>
        <location evidence="2">Periplasm</location>
    </subcellularLocation>
</comment>
<comment type="similarity">
    <text evidence="4">Belongs to the peptidase S9C family.</text>
</comment>
<feature type="signal peptide" evidence="2">
    <location>
        <begin position="1"/>
        <end position="24"/>
    </location>
</feature>
<feature type="chain" id="PRO_5002781709" description="Dipeptidyl-peptidase 5">
    <location>
        <begin position="25"/>
        <end position="684"/>
    </location>
</feature>
<feature type="repeat" description="WD 1" evidence="1">
    <location>
        <begin position="87"/>
        <end position="127"/>
    </location>
</feature>
<feature type="repeat" description="WD 2" evidence="1">
    <location>
        <begin position="220"/>
        <end position="259"/>
    </location>
</feature>
<feature type="repeat" description="WD 3" evidence="1">
    <location>
        <begin position="323"/>
        <end position="363"/>
    </location>
</feature>
<feature type="active site" description="Charge relay system" evidence="4">
    <location>
        <position position="542"/>
    </location>
</feature>
<feature type="active site" description="Charge relay system" evidence="4">
    <location>
        <position position="627"/>
    </location>
</feature>
<feature type="active site" description="Charge relay system" evidence="4">
    <location>
        <position position="659"/>
    </location>
</feature>
<sequence length="684" mass="77455">MNKKIFSMMAASIIGSAAMTPSAGTNTGEHLTPELFMTLSRVSEMALSPDGKTAVYAVSFPDVKTNKATRELFTVNLDGSGRKQITDTESNEYAPAWMADGKRIAFMSNEGGSMQLWVMNADGTERRQLSNIEGGITGFLFSPDEKQVLFTKDIKFGKRTKDIYPDLDKATGRIITDLMYKHWDEWVETIPHPFIANATDGMITTGKDIMEGEPYEAPMKPWSGIEDFSWSPDGQNIAYASRKKTGMAYSLSTNSDIYIYNLTSGRTHNISEGMMGYDTYPKFSPDGKSIAWISMERDGYESDLKRLFVADLATGKRTHVNPTFDYNVDMIQWAPDSKGIYFLACKEAETNLWEITLKTGKIRQITQGQHDYADFSVRNDVMLAKRHSFELPDDLYRVNPKNGAAQAVTAENKAILDRLTPIACEKRWMKTTDGGNMLTWVVLPPDFDKNKKYPAILYCQGGPQNTVSQFWSFRWNLRLMAEQGYIVIAPNRHGVPGFGQKWNEQISGDYGGQNMRDYLTAVDEMKKEPYVDGDRIGAVGASYGGFSVYWLAGHHDKRFAAFIAHAGIFNLEMQYATTEEMWFANWDIGGPFWEKDNVVAQRTYATSPHKYVQNWDTPILMIHGELDFRILASQAMAAFDAAQLRGVPSEMLIYPDENHWVLQPQNALLFHRTFFGWLDRWLKK</sequence>